<sequence>MKTLVIVIHPNLETSVVNKTWMNRLKQEKDITVHDLYGEYPNFIIDVEKEQQLLLDHERIVFQFPMYWYSSPALLKQWEDDVLTHGWAYGTGGTKLHGKELLLAISLGAQESDYQAGGEYNITISELIRPFQVTANYIGMRFLPAFTQYGTLHLSKEDVKNSAERLVDYLKAEH</sequence>
<protein>
    <recommendedName>
        <fullName>Uncharacterized NAD(P)H oxidoreductase YrkL</fullName>
        <ecNumber>1.6.99.-</ecNumber>
    </recommendedName>
</protein>
<feature type="chain" id="PRO_0000071634" description="Uncharacterized NAD(P)H oxidoreductase YrkL">
    <location>
        <begin position="1"/>
        <end position="174"/>
    </location>
</feature>
<feature type="sequence conflict" description="In Ref. 1; BAA12367." evidence="1" ref="1">
    <original>L</original>
    <variation>S</variation>
    <location>
        <position position="107"/>
    </location>
</feature>
<gene>
    <name type="primary">yrkL</name>
    <name type="ordered locus">BSU26470</name>
</gene>
<dbReference type="EC" id="1.6.99.-"/>
<dbReference type="EMBL" id="D84432">
    <property type="protein sequence ID" value="BAA12367.1"/>
    <property type="molecule type" value="Genomic_DNA"/>
</dbReference>
<dbReference type="EMBL" id="AL009126">
    <property type="protein sequence ID" value="CAB14588.2"/>
    <property type="molecule type" value="Genomic_DNA"/>
</dbReference>
<dbReference type="PIR" id="B69977">
    <property type="entry name" value="B69977"/>
</dbReference>
<dbReference type="RefSeq" id="NP_390524.2">
    <property type="nucleotide sequence ID" value="NC_000964.3"/>
</dbReference>
<dbReference type="RefSeq" id="WP_003246192.1">
    <property type="nucleotide sequence ID" value="NZ_OZ025638.1"/>
</dbReference>
<dbReference type="SMR" id="P54439"/>
<dbReference type="FunCoup" id="P54439">
    <property type="interactions" value="47"/>
</dbReference>
<dbReference type="STRING" id="224308.BSU26470"/>
<dbReference type="PaxDb" id="224308-BSU26470"/>
<dbReference type="EnsemblBacteria" id="CAB14588">
    <property type="protein sequence ID" value="CAB14588"/>
    <property type="gene ID" value="BSU_26470"/>
</dbReference>
<dbReference type="GeneID" id="937658"/>
<dbReference type="KEGG" id="bsu:BSU26470"/>
<dbReference type="PATRIC" id="fig|224308.179.peg.2875"/>
<dbReference type="eggNOG" id="COG2249">
    <property type="taxonomic scope" value="Bacteria"/>
</dbReference>
<dbReference type="InParanoid" id="P54439"/>
<dbReference type="OrthoDB" id="9798454at2"/>
<dbReference type="PhylomeDB" id="P54439"/>
<dbReference type="BioCyc" id="BSUB:BSU26470-MONOMER"/>
<dbReference type="Proteomes" id="UP000001570">
    <property type="component" value="Chromosome"/>
</dbReference>
<dbReference type="GO" id="GO:0009055">
    <property type="term" value="F:electron transfer activity"/>
    <property type="evidence" value="ECO:0000318"/>
    <property type="project" value="GO_Central"/>
</dbReference>
<dbReference type="GO" id="GO:0010181">
    <property type="term" value="F:FMN binding"/>
    <property type="evidence" value="ECO:0000318"/>
    <property type="project" value="GO_Central"/>
</dbReference>
<dbReference type="GO" id="GO:0003955">
    <property type="term" value="F:NAD(P)H dehydrogenase (quinone) activity"/>
    <property type="evidence" value="ECO:0000318"/>
    <property type="project" value="GO_Central"/>
</dbReference>
<dbReference type="FunFam" id="3.40.50.360:FF:000013">
    <property type="entry name" value="Glutathione-regulated potassium-efflux system ancillary protein KefG"/>
    <property type="match status" value="1"/>
</dbReference>
<dbReference type="Gene3D" id="3.40.50.360">
    <property type="match status" value="1"/>
</dbReference>
<dbReference type="InterPro" id="IPR003680">
    <property type="entry name" value="Flavodoxin_fold"/>
</dbReference>
<dbReference type="InterPro" id="IPR029039">
    <property type="entry name" value="Flavoprotein-like_sf"/>
</dbReference>
<dbReference type="InterPro" id="IPR046980">
    <property type="entry name" value="KefG/KefF"/>
</dbReference>
<dbReference type="PANTHER" id="PTHR47307">
    <property type="entry name" value="GLUTATHIONE-REGULATED POTASSIUM-EFFLUX SYSTEM ANCILLARY PROTEIN KEFG"/>
    <property type="match status" value="1"/>
</dbReference>
<dbReference type="PANTHER" id="PTHR47307:SF1">
    <property type="entry name" value="GLUTATHIONE-REGULATED POTASSIUM-EFFLUX SYSTEM ANCILLARY PROTEIN KEFG"/>
    <property type="match status" value="1"/>
</dbReference>
<dbReference type="Pfam" id="PF02525">
    <property type="entry name" value="Flavodoxin_2"/>
    <property type="match status" value="1"/>
</dbReference>
<dbReference type="SUPFAM" id="SSF52218">
    <property type="entry name" value="Flavoproteins"/>
    <property type="match status" value="1"/>
</dbReference>
<evidence type="ECO:0000305" key="1"/>
<proteinExistence type="inferred from homology"/>
<organism>
    <name type="scientific">Bacillus subtilis (strain 168)</name>
    <dbReference type="NCBI Taxonomy" id="224308"/>
    <lineage>
        <taxon>Bacteria</taxon>
        <taxon>Bacillati</taxon>
        <taxon>Bacillota</taxon>
        <taxon>Bacilli</taxon>
        <taxon>Bacillales</taxon>
        <taxon>Bacillaceae</taxon>
        <taxon>Bacillus</taxon>
    </lineage>
</organism>
<accession>P54439</accession>
<name>YRKL_BACSU</name>
<keyword id="KW-0560">Oxidoreductase</keyword>
<keyword id="KW-1185">Reference proteome</keyword>
<reference key="1">
    <citation type="journal article" date="1996" name="Microbiology">
        <title>Systematic sequencing of the 283 kb 210 degrees-232 degrees region of the Bacillus subtilis genome containing the skin element and many sporulation genes.</title>
        <authorList>
            <person name="Mizuno M."/>
            <person name="Masuda S."/>
            <person name="Takemaru K."/>
            <person name="Hosono S."/>
            <person name="Sato T."/>
            <person name="Takeuchi M."/>
            <person name="Kobayashi Y."/>
        </authorList>
    </citation>
    <scope>NUCLEOTIDE SEQUENCE [GENOMIC DNA]</scope>
    <source>
        <strain>168 / JH642</strain>
    </source>
</reference>
<reference key="2">
    <citation type="journal article" date="1997" name="Nature">
        <title>The complete genome sequence of the Gram-positive bacterium Bacillus subtilis.</title>
        <authorList>
            <person name="Kunst F."/>
            <person name="Ogasawara N."/>
            <person name="Moszer I."/>
            <person name="Albertini A.M."/>
            <person name="Alloni G."/>
            <person name="Azevedo V."/>
            <person name="Bertero M.G."/>
            <person name="Bessieres P."/>
            <person name="Bolotin A."/>
            <person name="Borchert S."/>
            <person name="Borriss R."/>
            <person name="Boursier L."/>
            <person name="Brans A."/>
            <person name="Braun M."/>
            <person name="Brignell S.C."/>
            <person name="Bron S."/>
            <person name="Brouillet S."/>
            <person name="Bruschi C.V."/>
            <person name="Caldwell B."/>
            <person name="Capuano V."/>
            <person name="Carter N.M."/>
            <person name="Choi S.-K."/>
            <person name="Codani J.-J."/>
            <person name="Connerton I.F."/>
            <person name="Cummings N.J."/>
            <person name="Daniel R.A."/>
            <person name="Denizot F."/>
            <person name="Devine K.M."/>
            <person name="Duesterhoeft A."/>
            <person name="Ehrlich S.D."/>
            <person name="Emmerson P.T."/>
            <person name="Entian K.-D."/>
            <person name="Errington J."/>
            <person name="Fabret C."/>
            <person name="Ferrari E."/>
            <person name="Foulger D."/>
            <person name="Fritz C."/>
            <person name="Fujita M."/>
            <person name="Fujita Y."/>
            <person name="Fuma S."/>
            <person name="Galizzi A."/>
            <person name="Galleron N."/>
            <person name="Ghim S.-Y."/>
            <person name="Glaser P."/>
            <person name="Goffeau A."/>
            <person name="Golightly E.J."/>
            <person name="Grandi G."/>
            <person name="Guiseppi G."/>
            <person name="Guy B.J."/>
            <person name="Haga K."/>
            <person name="Haiech J."/>
            <person name="Harwood C.R."/>
            <person name="Henaut A."/>
            <person name="Hilbert H."/>
            <person name="Holsappel S."/>
            <person name="Hosono S."/>
            <person name="Hullo M.-F."/>
            <person name="Itaya M."/>
            <person name="Jones L.-M."/>
            <person name="Joris B."/>
            <person name="Karamata D."/>
            <person name="Kasahara Y."/>
            <person name="Klaerr-Blanchard M."/>
            <person name="Klein C."/>
            <person name="Kobayashi Y."/>
            <person name="Koetter P."/>
            <person name="Koningstein G."/>
            <person name="Krogh S."/>
            <person name="Kumano M."/>
            <person name="Kurita K."/>
            <person name="Lapidus A."/>
            <person name="Lardinois S."/>
            <person name="Lauber J."/>
            <person name="Lazarevic V."/>
            <person name="Lee S.-M."/>
            <person name="Levine A."/>
            <person name="Liu H."/>
            <person name="Masuda S."/>
            <person name="Mauel C."/>
            <person name="Medigue C."/>
            <person name="Medina N."/>
            <person name="Mellado R.P."/>
            <person name="Mizuno M."/>
            <person name="Moestl D."/>
            <person name="Nakai S."/>
            <person name="Noback M."/>
            <person name="Noone D."/>
            <person name="O'Reilly M."/>
            <person name="Ogawa K."/>
            <person name="Ogiwara A."/>
            <person name="Oudega B."/>
            <person name="Park S.-H."/>
            <person name="Parro V."/>
            <person name="Pohl T.M."/>
            <person name="Portetelle D."/>
            <person name="Porwollik S."/>
            <person name="Prescott A.M."/>
            <person name="Presecan E."/>
            <person name="Pujic P."/>
            <person name="Purnelle B."/>
            <person name="Rapoport G."/>
            <person name="Rey M."/>
            <person name="Reynolds S."/>
            <person name="Rieger M."/>
            <person name="Rivolta C."/>
            <person name="Rocha E."/>
            <person name="Roche B."/>
            <person name="Rose M."/>
            <person name="Sadaie Y."/>
            <person name="Sato T."/>
            <person name="Scanlan E."/>
            <person name="Schleich S."/>
            <person name="Schroeter R."/>
            <person name="Scoffone F."/>
            <person name="Sekiguchi J."/>
            <person name="Sekowska A."/>
            <person name="Seror S.J."/>
            <person name="Serror P."/>
            <person name="Shin B.-S."/>
            <person name="Soldo B."/>
            <person name="Sorokin A."/>
            <person name="Tacconi E."/>
            <person name="Takagi T."/>
            <person name="Takahashi H."/>
            <person name="Takemaru K."/>
            <person name="Takeuchi M."/>
            <person name="Tamakoshi A."/>
            <person name="Tanaka T."/>
            <person name="Terpstra P."/>
            <person name="Tognoni A."/>
            <person name="Tosato V."/>
            <person name="Uchiyama S."/>
            <person name="Vandenbol M."/>
            <person name="Vannier F."/>
            <person name="Vassarotti A."/>
            <person name="Viari A."/>
            <person name="Wambutt R."/>
            <person name="Wedler E."/>
            <person name="Wedler H."/>
            <person name="Weitzenegger T."/>
            <person name="Winters P."/>
            <person name="Wipat A."/>
            <person name="Yamamoto H."/>
            <person name="Yamane K."/>
            <person name="Yasumoto K."/>
            <person name="Yata K."/>
            <person name="Yoshida K."/>
            <person name="Yoshikawa H.-F."/>
            <person name="Zumstein E."/>
            <person name="Yoshikawa H."/>
            <person name="Danchin A."/>
        </authorList>
    </citation>
    <scope>NUCLEOTIDE SEQUENCE [LARGE SCALE GENOMIC DNA]</scope>
    <source>
        <strain>168</strain>
    </source>
</reference>
<reference key="3">
    <citation type="journal article" date="2009" name="Microbiology">
        <title>From a consortium sequence to a unified sequence: the Bacillus subtilis 168 reference genome a decade later.</title>
        <authorList>
            <person name="Barbe V."/>
            <person name="Cruveiller S."/>
            <person name="Kunst F."/>
            <person name="Lenoble P."/>
            <person name="Meurice G."/>
            <person name="Sekowska A."/>
            <person name="Vallenet D."/>
            <person name="Wang T."/>
            <person name="Moszer I."/>
            <person name="Medigue C."/>
            <person name="Danchin A."/>
        </authorList>
    </citation>
    <scope>SEQUENCE REVISION TO 107</scope>
</reference>
<comment type="similarity">
    <text evidence="1">Belongs to the NAD(P)H dehydrogenase (quinone) family.</text>
</comment>